<feature type="chain" id="PRO_1000096607" description="Uracil-DNA glycosylase">
    <location>
        <begin position="1"/>
        <end position="229"/>
    </location>
</feature>
<feature type="active site" description="Proton acceptor" evidence="1">
    <location>
        <position position="64"/>
    </location>
</feature>
<protein>
    <recommendedName>
        <fullName evidence="1">Uracil-DNA glycosylase</fullName>
        <shortName evidence="1">UDG</shortName>
        <ecNumber evidence="1">3.2.2.27</ecNumber>
    </recommendedName>
</protein>
<proteinExistence type="inferred from homology"/>
<evidence type="ECO:0000255" key="1">
    <source>
        <dbReference type="HAMAP-Rule" id="MF_00148"/>
    </source>
</evidence>
<organism>
    <name type="scientific">Salmonella paratyphi A (strain AKU_12601)</name>
    <dbReference type="NCBI Taxonomy" id="554290"/>
    <lineage>
        <taxon>Bacteria</taxon>
        <taxon>Pseudomonadati</taxon>
        <taxon>Pseudomonadota</taxon>
        <taxon>Gammaproteobacteria</taxon>
        <taxon>Enterobacterales</taxon>
        <taxon>Enterobacteriaceae</taxon>
        <taxon>Salmonella</taxon>
    </lineage>
</organism>
<keyword id="KW-0963">Cytoplasm</keyword>
<keyword id="KW-0227">DNA damage</keyword>
<keyword id="KW-0234">DNA repair</keyword>
<keyword id="KW-0378">Hydrolase</keyword>
<comment type="function">
    <text evidence="1">Excises uracil residues from the DNA which can arise as a result of misincorporation of dUMP residues by DNA polymerase or due to deamination of cytosine.</text>
</comment>
<comment type="catalytic activity">
    <reaction evidence="1">
        <text>Hydrolyzes single-stranded DNA or mismatched double-stranded DNA and polynucleotides, releasing free uracil.</text>
        <dbReference type="EC" id="3.2.2.27"/>
    </reaction>
</comment>
<comment type="subcellular location">
    <subcellularLocation>
        <location evidence="1">Cytoplasm</location>
    </subcellularLocation>
</comment>
<comment type="similarity">
    <text evidence="1">Belongs to the uracil-DNA glycosylase (UDG) superfamily. UNG family.</text>
</comment>
<reference key="1">
    <citation type="journal article" date="2009" name="BMC Genomics">
        <title>Pseudogene accumulation in the evolutionary histories of Salmonella enterica serovars Paratyphi A and Typhi.</title>
        <authorList>
            <person name="Holt K.E."/>
            <person name="Thomson N.R."/>
            <person name="Wain J."/>
            <person name="Langridge G.C."/>
            <person name="Hasan R."/>
            <person name="Bhutta Z.A."/>
            <person name="Quail M.A."/>
            <person name="Norbertczak H."/>
            <person name="Walker D."/>
            <person name="Simmonds M."/>
            <person name="White B."/>
            <person name="Bason N."/>
            <person name="Mungall K."/>
            <person name="Dougan G."/>
            <person name="Parkhill J."/>
        </authorList>
    </citation>
    <scope>NUCLEOTIDE SEQUENCE [LARGE SCALE GENOMIC DNA]</scope>
    <source>
        <strain>AKU_12601</strain>
    </source>
</reference>
<name>UNG_SALPK</name>
<sequence>MATELTWHDVLADEKQQPYFINTLHTVAGERQSGITVYPPQKDVFNAFRFTELGDVKVVILGQDPYHGPGQAHGLAFSVRPGIAPPPSLVNMYKELEASIPGFVRPAHGYLESWARQGVLLLNTVLTVRAGQAHSHASLGWETFTDKVISLINQHREGVVFLLWGSHAQKKGAIIDPQRHHILKAPHPSPLSAHRGFFGCNHFALTNQWLEQHGEKTIDWTPVLPAESE</sequence>
<gene>
    <name evidence="1" type="primary">ung</name>
    <name type="ordered locus">SSPA0256</name>
</gene>
<dbReference type="EC" id="3.2.2.27" evidence="1"/>
<dbReference type="EMBL" id="FM200053">
    <property type="protein sequence ID" value="CAR58371.1"/>
    <property type="molecule type" value="Genomic_DNA"/>
</dbReference>
<dbReference type="RefSeq" id="WP_000179978.1">
    <property type="nucleotide sequence ID" value="NC_011147.1"/>
</dbReference>
<dbReference type="SMR" id="B5BAR7"/>
<dbReference type="KEGG" id="sek:SSPA0256"/>
<dbReference type="HOGENOM" id="CLU_032162_3_0_6"/>
<dbReference type="Proteomes" id="UP000001869">
    <property type="component" value="Chromosome"/>
</dbReference>
<dbReference type="GO" id="GO:0005737">
    <property type="term" value="C:cytoplasm"/>
    <property type="evidence" value="ECO:0007669"/>
    <property type="project" value="UniProtKB-SubCell"/>
</dbReference>
<dbReference type="GO" id="GO:0004844">
    <property type="term" value="F:uracil DNA N-glycosylase activity"/>
    <property type="evidence" value="ECO:0007669"/>
    <property type="project" value="UniProtKB-UniRule"/>
</dbReference>
<dbReference type="GO" id="GO:0097510">
    <property type="term" value="P:base-excision repair, AP site formation via deaminated base removal"/>
    <property type="evidence" value="ECO:0007669"/>
    <property type="project" value="TreeGrafter"/>
</dbReference>
<dbReference type="CDD" id="cd10027">
    <property type="entry name" value="UDG-F1-like"/>
    <property type="match status" value="1"/>
</dbReference>
<dbReference type="FunFam" id="3.40.470.10:FF:000001">
    <property type="entry name" value="Uracil-DNA glycosylase"/>
    <property type="match status" value="1"/>
</dbReference>
<dbReference type="Gene3D" id="3.40.470.10">
    <property type="entry name" value="Uracil-DNA glycosylase-like domain"/>
    <property type="match status" value="1"/>
</dbReference>
<dbReference type="HAMAP" id="MF_00148">
    <property type="entry name" value="UDG"/>
    <property type="match status" value="1"/>
</dbReference>
<dbReference type="InterPro" id="IPR002043">
    <property type="entry name" value="UDG_fam1"/>
</dbReference>
<dbReference type="InterPro" id="IPR018085">
    <property type="entry name" value="Ura-DNA_Glyclase_AS"/>
</dbReference>
<dbReference type="InterPro" id="IPR005122">
    <property type="entry name" value="Uracil-DNA_glycosylase-like"/>
</dbReference>
<dbReference type="InterPro" id="IPR036895">
    <property type="entry name" value="Uracil-DNA_glycosylase-like_sf"/>
</dbReference>
<dbReference type="NCBIfam" id="NF003588">
    <property type="entry name" value="PRK05254.1-1"/>
    <property type="match status" value="1"/>
</dbReference>
<dbReference type="NCBIfam" id="NF003589">
    <property type="entry name" value="PRK05254.1-2"/>
    <property type="match status" value="1"/>
</dbReference>
<dbReference type="NCBIfam" id="NF003591">
    <property type="entry name" value="PRK05254.1-4"/>
    <property type="match status" value="1"/>
</dbReference>
<dbReference type="NCBIfam" id="NF003592">
    <property type="entry name" value="PRK05254.1-5"/>
    <property type="match status" value="1"/>
</dbReference>
<dbReference type="NCBIfam" id="TIGR00628">
    <property type="entry name" value="ung"/>
    <property type="match status" value="1"/>
</dbReference>
<dbReference type="PANTHER" id="PTHR11264">
    <property type="entry name" value="URACIL-DNA GLYCOSYLASE"/>
    <property type="match status" value="1"/>
</dbReference>
<dbReference type="PANTHER" id="PTHR11264:SF0">
    <property type="entry name" value="URACIL-DNA GLYCOSYLASE"/>
    <property type="match status" value="1"/>
</dbReference>
<dbReference type="Pfam" id="PF03167">
    <property type="entry name" value="UDG"/>
    <property type="match status" value="1"/>
</dbReference>
<dbReference type="SMART" id="SM00986">
    <property type="entry name" value="UDG"/>
    <property type="match status" value="1"/>
</dbReference>
<dbReference type="SMART" id="SM00987">
    <property type="entry name" value="UreE_C"/>
    <property type="match status" value="1"/>
</dbReference>
<dbReference type="SUPFAM" id="SSF52141">
    <property type="entry name" value="Uracil-DNA glycosylase-like"/>
    <property type="match status" value="1"/>
</dbReference>
<dbReference type="PROSITE" id="PS00130">
    <property type="entry name" value="U_DNA_GLYCOSYLASE"/>
    <property type="match status" value="1"/>
</dbReference>
<accession>B5BAR7</accession>